<gene>
    <name evidence="1" type="primary">dapA</name>
    <name type="ordered locus">HPAG1_0433</name>
</gene>
<accession>Q1CU72</accession>
<protein>
    <recommendedName>
        <fullName evidence="1">4-hydroxy-tetrahydrodipicolinate synthase</fullName>
        <shortName evidence="1">HTPA synthase</shortName>
        <ecNumber evidence="1">4.3.3.7</ecNumber>
    </recommendedName>
</protein>
<evidence type="ECO:0000255" key="1">
    <source>
        <dbReference type="HAMAP-Rule" id="MF_00418"/>
    </source>
</evidence>
<evidence type="ECO:0000305" key="2"/>
<reference key="1">
    <citation type="journal article" date="2006" name="Proc. Natl. Acad. Sci. U.S.A.">
        <title>The complete genome sequence of a chronic atrophic gastritis Helicobacter pylori strain: evolution during disease progression.</title>
        <authorList>
            <person name="Oh J.D."/>
            <person name="Kling-Baeckhed H."/>
            <person name="Giannakis M."/>
            <person name="Xu J."/>
            <person name="Fulton R.S."/>
            <person name="Fulton L.A."/>
            <person name="Cordum H.S."/>
            <person name="Wang C."/>
            <person name="Elliott G."/>
            <person name="Edwards J."/>
            <person name="Mardis E.R."/>
            <person name="Engstrand L.G."/>
            <person name="Gordon J.I."/>
        </authorList>
    </citation>
    <scope>NUCLEOTIDE SEQUENCE [LARGE SCALE GENOMIC DNA]</scope>
    <source>
        <strain>HPAG1</strain>
    </source>
</reference>
<feature type="chain" id="PRO_1000050197" description="4-hydroxy-tetrahydrodipicolinate synthase">
    <location>
        <begin position="1"/>
        <end position="300"/>
    </location>
</feature>
<feature type="active site" description="Proton donor/acceptor" evidence="1">
    <location>
        <position position="140"/>
    </location>
</feature>
<feature type="active site" description="Schiff-base intermediate with substrate" evidence="1">
    <location>
        <position position="169"/>
    </location>
</feature>
<feature type="binding site" evidence="1">
    <location>
        <position position="45"/>
    </location>
    <ligand>
        <name>pyruvate</name>
        <dbReference type="ChEBI" id="CHEBI:15361"/>
    </ligand>
</feature>
<feature type="binding site" evidence="1">
    <location>
        <position position="210"/>
    </location>
    <ligand>
        <name>pyruvate</name>
        <dbReference type="ChEBI" id="CHEBI:15361"/>
    </ligand>
</feature>
<feature type="site" description="Part of a proton relay during catalysis" evidence="1">
    <location>
        <position position="44"/>
    </location>
</feature>
<feature type="site" description="Part of a proton relay during catalysis" evidence="1">
    <location>
        <position position="114"/>
    </location>
</feature>
<sequence length="300" mass="33151">MQFHSSSALITPFKKDLSVDEAAYESLIKRQILQGMDACVPVGTTGESATLTHKEHMRCIEIAIETCKNTKTPSNSCMKVLAGVGSNATSESLSLAKFAQKIGADAILCVSPYYNRPTQQGLFEHYKTIAQSVEIPVMLYDVPSRTGVSIEVPTALKLFREVPNIKAIKEASGSLKRVTELHYYEKDFKIFSGEDSLNHSIMFSGGCGVISVTGNLMPNLISQMVNCALKQKYQQALEIQNKLFHLHQALFVETNPIPIKMAMHLAGLIENPSYRLPLVAPSKETIQLLEKTLQQYEVIA</sequence>
<proteinExistence type="inferred from homology"/>
<comment type="function">
    <text evidence="1">Catalyzes the condensation of (S)-aspartate-beta-semialdehyde [(S)-ASA] and pyruvate to 4-hydroxy-tetrahydrodipicolinate (HTPA).</text>
</comment>
<comment type="catalytic activity">
    <reaction evidence="1">
        <text>L-aspartate 4-semialdehyde + pyruvate = (2S,4S)-4-hydroxy-2,3,4,5-tetrahydrodipicolinate + H2O + H(+)</text>
        <dbReference type="Rhea" id="RHEA:34171"/>
        <dbReference type="ChEBI" id="CHEBI:15361"/>
        <dbReference type="ChEBI" id="CHEBI:15377"/>
        <dbReference type="ChEBI" id="CHEBI:15378"/>
        <dbReference type="ChEBI" id="CHEBI:67139"/>
        <dbReference type="ChEBI" id="CHEBI:537519"/>
        <dbReference type="EC" id="4.3.3.7"/>
    </reaction>
</comment>
<comment type="pathway">
    <text evidence="1">Amino-acid biosynthesis; L-lysine biosynthesis via DAP pathway; (S)-tetrahydrodipicolinate from L-aspartate: step 3/4.</text>
</comment>
<comment type="subunit">
    <text evidence="1">Homotetramer; dimer of dimers.</text>
</comment>
<comment type="subcellular location">
    <subcellularLocation>
        <location evidence="1">Cytoplasm</location>
    </subcellularLocation>
</comment>
<comment type="similarity">
    <text evidence="1">Belongs to the DapA family.</text>
</comment>
<comment type="caution">
    <text evidence="2">Was originally thought to be a dihydrodipicolinate synthase (DHDPS), catalyzing the condensation of (S)-aspartate-beta-semialdehyde [(S)-ASA] and pyruvate to dihydrodipicolinate (DHDP). However, it was shown in E.coli that the product of the enzymatic reaction is not dihydrodipicolinate but in fact (4S)-4-hydroxy-2,3,4,5-tetrahydro-(2S)-dipicolinic acid (HTPA), and that the consecutive dehydration reaction leading to DHDP is not spontaneous but catalyzed by DapB.</text>
</comment>
<dbReference type="EC" id="4.3.3.7" evidence="1"/>
<dbReference type="EMBL" id="CP000241">
    <property type="protein sequence ID" value="ABF84500.1"/>
    <property type="molecule type" value="Genomic_DNA"/>
</dbReference>
<dbReference type="RefSeq" id="WP_001159529.1">
    <property type="nucleotide sequence ID" value="NC_008086.1"/>
</dbReference>
<dbReference type="SMR" id="Q1CU72"/>
<dbReference type="KEGG" id="hpa:HPAG1_0433"/>
<dbReference type="HOGENOM" id="CLU_049343_7_0_7"/>
<dbReference type="UniPathway" id="UPA00034">
    <property type="reaction ID" value="UER00017"/>
</dbReference>
<dbReference type="GO" id="GO:0005829">
    <property type="term" value="C:cytosol"/>
    <property type="evidence" value="ECO:0007669"/>
    <property type="project" value="TreeGrafter"/>
</dbReference>
<dbReference type="GO" id="GO:0008840">
    <property type="term" value="F:4-hydroxy-tetrahydrodipicolinate synthase activity"/>
    <property type="evidence" value="ECO:0007669"/>
    <property type="project" value="UniProtKB-UniRule"/>
</dbReference>
<dbReference type="GO" id="GO:0019877">
    <property type="term" value="P:diaminopimelate biosynthetic process"/>
    <property type="evidence" value="ECO:0007669"/>
    <property type="project" value="UniProtKB-UniRule"/>
</dbReference>
<dbReference type="GO" id="GO:0009089">
    <property type="term" value="P:lysine biosynthetic process via diaminopimelate"/>
    <property type="evidence" value="ECO:0007669"/>
    <property type="project" value="UniProtKB-UniRule"/>
</dbReference>
<dbReference type="CDD" id="cd00950">
    <property type="entry name" value="DHDPS"/>
    <property type="match status" value="1"/>
</dbReference>
<dbReference type="Gene3D" id="3.20.20.70">
    <property type="entry name" value="Aldolase class I"/>
    <property type="match status" value="1"/>
</dbReference>
<dbReference type="HAMAP" id="MF_00418">
    <property type="entry name" value="DapA"/>
    <property type="match status" value="1"/>
</dbReference>
<dbReference type="InterPro" id="IPR013785">
    <property type="entry name" value="Aldolase_TIM"/>
</dbReference>
<dbReference type="InterPro" id="IPR005263">
    <property type="entry name" value="DapA"/>
</dbReference>
<dbReference type="InterPro" id="IPR002220">
    <property type="entry name" value="DapA-like"/>
</dbReference>
<dbReference type="InterPro" id="IPR020625">
    <property type="entry name" value="Schiff_base-form_aldolases_AS"/>
</dbReference>
<dbReference type="NCBIfam" id="TIGR00674">
    <property type="entry name" value="dapA"/>
    <property type="match status" value="1"/>
</dbReference>
<dbReference type="PANTHER" id="PTHR12128:SF66">
    <property type="entry name" value="4-HYDROXY-2-OXOGLUTARATE ALDOLASE, MITOCHONDRIAL"/>
    <property type="match status" value="1"/>
</dbReference>
<dbReference type="PANTHER" id="PTHR12128">
    <property type="entry name" value="DIHYDRODIPICOLINATE SYNTHASE"/>
    <property type="match status" value="1"/>
</dbReference>
<dbReference type="Pfam" id="PF00701">
    <property type="entry name" value="DHDPS"/>
    <property type="match status" value="1"/>
</dbReference>
<dbReference type="PIRSF" id="PIRSF001365">
    <property type="entry name" value="DHDPS"/>
    <property type="match status" value="1"/>
</dbReference>
<dbReference type="PRINTS" id="PR00146">
    <property type="entry name" value="DHPICSNTHASE"/>
</dbReference>
<dbReference type="SMART" id="SM01130">
    <property type="entry name" value="DHDPS"/>
    <property type="match status" value="1"/>
</dbReference>
<dbReference type="SUPFAM" id="SSF51569">
    <property type="entry name" value="Aldolase"/>
    <property type="match status" value="1"/>
</dbReference>
<dbReference type="PROSITE" id="PS00666">
    <property type="entry name" value="DHDPS_2"/>
    <property type="match status" value="1"/>
</dbReference>
<organism>
    <name type="scientific">Helicobacter pylori (strain HPAG1)</name>
    <dbReference type="NCBI Taxonomy" id="357544"/>
    <lineage>
        <taxon>Bacteria</taxon>
        <taxon>Pseudomonadati</taxon>
        <taxon>Campylobacterota</taxon>
        <taxon>Epsilonproteobacteria</taxon>
        <taxon>Campylobacterales</taxon>
        <taxon>Helicobacteraceae</taxon>
        <taxon>Helicobacter</taxon>
    </lineage>
</organism>
<keyword id="KW-0028">Amino-acid biosynthesis</keyword>
<keyword id="KW-0963">Cytoplasm</keyword>
<keyword id="KW-0220">Diaminopimelate biosynthesis</keyword>
<keyword id="KW-0456">Lyase</keyword>
<keyword id="KW-0457">Lysine biosynthesis</keyword>
<keyword id="KW-0704">Schiff base</keyword>
<name>DAPA_HELPH</name>